<reference key="1">
    <citation type="journal article" date="2009" name="PLoS Pathog.">
        <title>Genomic evidence for the evolution of Streptococcus equi: host restriction, increased virulence, and genetic exchange with human pathogens.</title>
        <authorList>
            <person name="Holden M.T.G."/>
            <person name="Heather Z."/>
            <person name="Paillot R."/>
            <person name="Steward K.F."/>
            <person name="Webb K."/>
            <person name="Ainslie F."/>
            <person name="Jourdan T."/>
            <person name="Bason N.C."/>
            <person name="Holroyd N.E."/>
            <person name="Mungall K."/>
            <person name="Quail M.A."/>
            <person name="Sanders M."/>
            <person name="Simmonds M."/>
            <person name="Willey D."/>
            <person name="Brooks K."/>
            <person name="Aanensen D.M."/>
            <person name="Spratt B.G."/>
            <person name="Jolley K.A."/>
            <person name="Maiden M.C.J."/>
            <person name="Kehoe M."/>
            <person name="Chanter N."/>
            <person name="Bentley S.D."/>
            <person name="Robinson C."/>
            <person name="Maskell D.J."/>
            <person name="Parkhill J."/>
            <person name="Waller A.S."/>
        </authorList>
    </citation>
    <scope>NUCLEOTIDE SEQUENCE [LARGE SCALE GENOMIC DNA]</scope>
    <source>
        <strain>H70</strain>
    </source>
</reference>
<name>CLPP_STRS7</name>
<dbReference type="EC" id="3.4.21.92" evidence="1"/>
<dbReference type="EMBL" id="FM204884">
    <property type="protein sequence ID" value="CAW98203.1"/>
    <property type="molecule type" value="Genomic_DNA"/>
</dbReference>
<dbReference type="SMR" id="C0MGT5"/>
<dbReference type="MEROPS" id="S14.001"/>
<dbReference type="KEGG" id="seq:SZO_03580"/>
<dbReference type="eggNOG" id="COG0740">
    <property type="taxonomic scope" value="Bacteria"/>
</dbReference>
<dbReference type="HOGENOM" id="CLU_058707_3_2_9"/>
<dbReference type="Proteomes" id="UP000001368">
    <property type="component" value="Chromosome"/>
</dbReference>
<dbReference type="GO" id="GO:0005737">
    <property type="term" value="C:cytoplasm"/>
    <property type="evidence" value="ECO:0007669"/>
    <property type="project" value="UniProtKB-SubCell"/>
</dbReference>
<dbReference type="GO" id="GO:0009368">
    <property type="term" value="C:endopeptidase Clp complex"/>
    <property type="evidence" value="ECO:0007669"/>
    <property type="project" value="TreeGrafter"/>
</dbReference>
<dbReference type="GO" id="GO:0004176">
    <property type="term" value="F:ATP-dependent peptidase activity"/>
    <property type="evidence" value="ECO:0007669"/>
    <property type="project" value="InterPro"/>
</dbReference>
<dbReference type="GO" id="GO:0051117">
    <property type="term" value="F:ATPase binding"/>
    <property type="evidence" value="ECO:0007669"/>
    <property type="project" value="TreeGrafter"/>
</dbReference>
<dbReference type="GO" id="GO:0004252">
    <property type="term" value="F:serine-type endopeptidase activity"/>
    <property type="evidence" value="ECO:0007669"/>
    <property type="project" value="UniProtKB-UniRule"/>
</dbReference>
<dbReference type="GO" id="GO:0006515">
    <property type="term" value="P:protein quality control for misfolded or incompletely synthesized proteins"/>
    <property type="evidence" value="ECO:0007669"/>
    <property type="project" value="TreeGrafter"/>
</dbReference>
<dbReference type="CDD" id="cd07017">
    <property type="entry name" value="S14_ClpP_2"/>
    <property type="match status" value="1"/>
</dbReference>
<dbReference type="FunFam" id="3.90.226.10:FF:000014">
    <property type="entry name" value="ATP-dependent Clp protease proteolytic subunit"/>
    <property type="match status" value="1"/>
</dbReference>
<dbReference type="Gene3D" id="3.90.226.10">
    <property type="entry name" value="2-enoyl-CoA Hydratase, Chain A, domain 1"/>
    <property type="match status" value="1"/>
</dbReference>
<dbReference type="HAMAP" id="MF_00444">
    <property type="entry name" value="ClpP"/>
    <property type="match status" value="1"/>
</dbReference>
<dbReference type="InterPro" id="IPR001907">
    <property type="entry name" value="ClpP"/>
</dbReference>
<dbReference type="InterPro" id="IPR029045">
    <property type="entry name" value="ClpP/crotonase-like_dom_sf"/>
</dbReference>
<dbReference type="InterPro" id="IPR023562">
    <property type="entry name" value="ClpP/TepA"/>
</dbReference>
<dbReference type="InterPro" id="IPR033135">
    <property type="entry name" value="ClpP_His_AS"/>
</dbReference>
<dbReference type="InterPro" id="IPR018215">
    <property type="entry name" value="ClpP_Ser_AS"/>
</dbReference>
<dbReference type="NCBIfam" id="NF001368">
    <property type="entry name" value="PRK00277.1"/>
    <property type="match status" value="1"/>
</dbReference>
<dbReference type="NCBIfam" id="NF009205">
    <property type="entry name" value="PRK12553.1"/>
    <property type="match status" value="1"/>
</dbReference>
<dbReference type="PANTHER" id="PTHR10381">
    <property type="entry name" value="ATP-DEPENDENT CLP PROTEASE PROTEOLYTIC SUBUNIT"/>
    <property type="match status" value="1"/>
</dbReference>
<dbReference type="PANTHER" id="PTHR10381:SF70">
    <property type="entry name" value="ATP-DEPENDENT CLP PROTEASE PROTEOLYTIC SUBUNIT"/>
    <property type="match status" value="1"/>
</dbReference>
<dbReference type="Pfam" id="PF00574">
    <property type="entry name" value="CLP_protease"/>
    <property type="match status" value="1"/>
</dbReference>
<dbReference type="PRINTS" id="PR00127">
    <property type="entry name" value="CLPPROTEASEP"/>
</dbReference>
<dbReference type="SUPFAM" id="SSF52096">
    <property type="entry name" value="ClpP/crotonase"/>
    <property type="match status" value="1"/>
</dbReference>
<dbReference type="PROSITE" id="PS00382">
    <property type="entry name" value="CLP_PROTEASE_HIS"/>
    <property type="match status" value="1"/>
</dbReference>
<dbReference type="PROSITE" id="PS00381">
    <property type="entry name" value="CLP_PROTEASE_SER"/>
    <property type="match status" value="1"/>
</dbReference>
<feature type="chain" id="PRO_1000206163" description="ATP-dependent Clp protease proteolytic subunit">
    <location>
        <begin position="1"/>
        <end position="196"/>
    </location>
</feature>
<feature type="active site" description="Nucleophile" evidence="1">
    <location>
        <position position="96"/>
    </location>
</feature>
<feature type="active site" evidence="1">
    <location>
        <position position="121"/>
    </location>
</feature>
<protein>
    <recommendedName>
        <fullName evidence="1">ATP-dependent Clp protease proteolytic subunit</fullName>
        <ecNumber evidence="1">3.4.21.92</ecNumber>
    </recommendedName>
    <alternativeName>
        <fullName evidence="1">Endopeptidase Clp</fullName>
    </alternativeName>
</protein>
<sequence length="196" mass="21562">MIPVVIEQTSRGERSYDIYSRLLKDRIIMLTGPVEDNMANSVIAQLLFLDAQDNTKDIYLYVNTPGGSVSAGLAIVDTMNFIKADVQTIVMGMAASMGTVIASSGAKGKRFMLPNAEYMIHQPMGGTGGGTQQTDMAIAAEHLLKTRHRLEKILAQNAGKTIKQIHKDAERDYWMSAEETLAYGFIDEIMENNELA</sequence>
<proteinExistence type="inferred from homology"/>
<accession>C0MGT5</accession>
<comment type="function">
    <text evidence="1">Cleaves peptides in various proteins in a process that requires ATP hydrolysis. Has a chymotrypsin-like activity. Plays a major role in the degradation of misfolded proteins.</text>
</comment>
<comment type="catalytic activity">
    <reaction evidence="1">
        <text>Hydrolysis of proteins to small peptides in the presence of ATP and magnesium. alpha-casein is the usual test substrate. In the absence of ATP, only oligopeptides shorter than five residues are hydrolyzed (such as succinyl-Leu-Tyr-|-NHMec, and Leu-Tyr-Leu-|-Tyr-Trp, in which cleavage of the -Tyr-|-Leu- and -Tyr-|-Trp bonds also occurs).</text>
        <dbReference type="EC" id="3.4.21.92"/>
    </reaction>
</comment>
<comment type="subunit">
    <text evidence="1">Fourteen ClpP subunits assemble into 2 heptameric rings which stack back to back to give a disk-like structure with a central cavity, resembling the structure of eukaryotic proteasomes.</text>
</comment>
<comment type="subcellular location">
    <subcellularLocation>
        <location evidence="1">Cytoplasm</location>
    </subcellularLocation>
</comment>
<comment type="similarity">
    <text evidence="1">Belongs to the peptidase S14 family.</text>
</comment>
<evidence type="ECO:0000255" key="1">
    <source>
        <dbReference type="HAMAP-Rule" id="MF_00444"/>
    </source>
</evidence>
<gene>
    <name evidence="1" type="primary">clpP</name>
    <name type="ordered locus">SZO_03580</name>
</gene>
<organism>
    <name type="scientific">Streptococcus equi subsp. zooepidemicus (strain H70)</name>
    <dbReference type="NCBI Taxonomy" id="553483"/>
    <lineage>
        <taxon>Bacteria</taxon>
        <taxon>Bacillati</taxon>
        <taxon>Bacillota</taxon>
        <taxon>Bacilli</taxon>
        <taxon>Lactobacillales</taxon>
        <taxon>Streptococcaceae</taxon>
        <taxon>Streptococcus</taxon>
    </lineage>
</organism>
<keyword id="KW-0963">Cytoplasm</keyword>
<keyword id="KW-0378">Hydrolase</keyword>
<keyword id="KW-0645">Protease</keyword>
<keyword id="KW-0720">Serine protease</keyword>